<sequence>MITMKNILKLRATGLLLLLLLMISVLGNGIGQAMAADRVYLDITAPETRKIKVAVPWFTNTGEGGMKARIAKDIADTVAKALKFHGIISIIPTSEYKGRQTADWAKLGADYAVLGSYKMFPKKIKLEIRLLDVAENNIILGKSYKGSMSQQNPMIFKFCDAAIKSLTGTEGIASSRIAFVSYEKRTKDVFMTDILGRRIRQVTRHNNLVVSPRFTRDGNFLSYSSYHSGSQKLYITDLRQAKITKSLSRRKGMNLAPTWAPDGKSCILTLSKYGAPDLFRINQQGKILEQLTSRAGVNVSPTYSADGRHIVFVSDRSGRPQLYLMELETKQTKRLTYDGRENAEPNWSPVENKIAYSSLRDGLYQIFTLDPFSAAPPKQLTSDLTRHESPVWSPDGNQILFTQYDGRRQQIYAIMKNGSYQRRVFSFPGSQSSARWAR</sequence>
<proteinExistence type="inferred from homology"/>
<protein>
    <recommendedName>
        <fullName evidence="1">Tol-Pal system protein TolB</fullName>
    </recommendedName>
</protein>
<name>TOLB_DESPS</name>
<keyword id="KW-0131">Cell cycle</keyword>
<keyword id="KW-0132">Cell division</keyword>
<keyword id="KW-0574">Periplasm</keyword>
<keyword id="KW-1185">Reference proteome</keyword>
<keyword id="KW-0732">Signal</keyword>
<organism>
    <name type="scientific">Desulfotalea psychrophila (strain LSv54 / DSM 12343)</name>
    <dbReference type="NCBI Taxonomy" id="177439"/>
    <lineage>
        <taxon>Bacteria</taxon>
        <taxon>Pseudomonadati</taxon>
        <taxon>Thermodesulfobacteriota</taxon>
        <taxon>Desulfobulbia</taxon>
        <taxon>Desulfobulbales</taxon>
        <taxon>Desulfocapsaceae</taxon>
        <taxon>Desulfotalea</taxon>
    </lineage>
</organism>
<feature type="signal peptide" evidence="1">
    <location>
        <begin position="1"/>
        <end position="35"/>
    </location>
</feature>
<feature type="chain" id="PRO_0000034645" description="Tol-Pal system protein TolB" evidence="1">
    <location>
        <begin position="36"/>
        <end position="438"/>
    </location>
</feature>
<dbReference type="EMBL" id="CR522870">
    <property type="protein sequence ID" value="CAG37141.1"/>
    <property type="molecule type" value="Genomic_DNA"/>
</dbReference>
<dbReference type="SMR" id="Q6AKI4"/>
<dbReference type="STRING" id="177439.DP2412"/>
<dbReference type="KEGG" id="dps:DP2412"/>
<dbReference type="eggNOG" id="COG0823">
    <property type="taxonomic scope" value="Bacteria"/>
</dbReference>
<dbReference type="HOGENOM" id="CLU_047123_0_0_7"/>
<dbReference type="OrthoDB" id="9815657at2"/>
<dbReference type="Proteomes" id="UP000000602">
    <property type="component" value="Chromosome"/>
</dbReference>
<dbReference type="GO" id="GO:0042597">
    <property type="term" value="C:periplasmic space"/>
    <property type="evidence" value="ECO:0007669"/>
    <property type="project" value="UniProtKB-SubCell"/>
</dbReference>
<dbReference type="GO" id="GO:0051301">
    <property type="term" value="P:cell division"/>
    <property type="evidence" value="ECO:0007669"/>
    <property type="project" value="UniProtKB-KW"/>
</dbReference>
<dbReference type="GO" id="GO:0017038">
    <property type="term" value="P:protein import"/>
    <property type="evidence" value="ECO:0007669"/>
    <property type="project" value="InterPro"/>
</dbReference>
<dbReference type="Gene3D" id="2.120.10.30">
    <property type="entry name" value="TolB, C-terminal domain"/>
    <property type="match status" value="1"/>
</dbReference>
<dbReference type="Gene3D" id="3.40.50.10070">
    <property type="entry name" value="TolB, N-terminal domain"/>
    <property type="match status" value="1"/>
</dbReference>
<dbReference type="Gene3D" id="2.120.10.60">
    <property type="entry name" value="Tricorn protease N-terminal domain"/>
    <property type="match status" value="1"/>
</dbReference>
<dbReference type="HAMAP" id="MF_00671">
    <property type="entry name" value="TolB"/>
    <property type="match status" value="1"/>
</dbReference>
<dbReference type="InterPro" id="IPR011042">
    <property type="entry name" value="6-blade_b-propeller_TolB-like"/>
</dbReference>
<dbReference type="InterPro" id="IPR011659">
    <property type="entry name" value="PD40"/>
</dbReference>
<dbReference type="InterPro" id="IPR014167">
    <property type="entry name" value="Tol-Pal_TolB"/>
</dbReference>
<dbReference type="InterPro" id="IPR007195">
    <property type="entry name" value="TolB_N"/>
</dbReference>
<dbReference type="PANTHER" id="PTHR36842:SF1">
    <property type="entry name" value="PROTEIN TOLB"/>
    <property type="match status" value="1"/>
</dbReference>
<dbReference type="PANTHER" id="PTHR36842">
    <property type="entry name" value="PROTEIN TOLB HOMOLOG"/>
    <property type="match status" value="1"/>
</dbReference>
<dbReference type="Pfam" id="PF07676">
    <property type="entry name" value="PD40"/>
    <property type="match status" value="3"/>
</dbReference>
<dbReference type="Pfam" id="PF04052">
    <property type="entry name" value="TolB_N"/>
    <property type="match status" value="1"/>
</dbReference>
<dbReference type="SUPFAM" id="SSF52964">
    <property type="entry name" value="TolB, N-terminal domain"/>
    <property type="match status" value="1"/>
</dbReference>
<dbReference type="SUPFAM" id="SSF69304">
    <property type="entry name" value="Tricorn protease N-terminal domain"/>
    <property type="match status" value="1"/>
</dbReference>
<reference key="1">
    <citation type="journal article" date="2004" name="Environ. Microbiol.">
        <title>The genome of Desulfotalea psychrophila, a sulfate-reducing bacterium from permanently cold Arctic sediments.</title>
        <authorList>
            <person name="Rabus R."/>
            <person name="Ruepp A."/>
            <person name="Frickey T."/>
            <person name="Rattei T."/>
            <person name="Fartmann B."/>
            <person name="Stark M."/>
            <person name="Bauer M."/>
            <person name="Zibat A."/>
            <person name="Lombardot T."/>
            <person name="Becker I."/>
            <person name="Amann J."/>
            <person name="Gellner K."/>
            <person name="Teeling H."/>
            <person name="Leuschner W.D."/>
            <person name="Gloeckner F.-O."/>
            <person name="Lupas A.N."/>
            <person name="Amann R."/>
            <person name="Klenk H.-P."/>
        </authorList>
    </citation>
    <scope>NUCLEOTIDE SEQUENCE [LARGE SCALE GENOMIC DNA]</scope>
    <source>
        <strain>DSM 12343 / LSv54</strain>
    </source>
</reference>
<evidence type="ECO:0000255" key="1">
    <source>
        <dbReference type="HAMAP-Rule" id="MF_00671"/>
    </source>
</evidence>
<accession>Q6AKI4</accession>
<comment type="function">
    <text evidence="1">Part of the Tol-Pal system, which plays a role in outer membrane invagination during cell division and is important for maintaining outer membrane integrity.</text>
</comment>
<comment type="subunit">
    <text evidence="1">The Tol-Pal system is composed of five core proteins: the inner membrane proteins TolA, TolQ and TolR, the periplasmic protein TolB and the outer membrane protein Pal. They form a network linking the inner and outer membranes and the peptidoglycan layer.</text>
</comment>
<comment type="subcellular location">
    <subcellularLocation>
        <location evidence="1">Periplasm</location>
    </subcellularLocation>
</comment>
<comment type="similarity">
    <text evidence="1">Belongs to the TolB family.</text>
</comment>
<gene>
    <name evidence="1" type="primary">tolB</name>
    <name type="ordered locus">DP2412</name>
</gene>